<protein>
    <recommendedName>
        <fullName evidence="1">Large ribosomal subunit protein uL4</fullName>
    </recommendedName>
    <alternativeName>
        <fullName evidence="3">50S ribosomal protein L4</fullName>
    </alternativeName>
</protein>
<accession>B3EGY9</accession>
<keyword id="KW-0687">Ribonucleoprotein</keyword>
<keyword id="KW-0689">Ribosomal protein</keyword>
<keyword id="KW-0694">RNA-binding</keyword>
<keyword id="KW-0699">rRNA-binding</keyword>
<evidence type="ECO:0000255" key="1">
    <source>
        <dbReference type="HAMAP-Rule" id="MF_01328"/>
    </source>
</evidence>
<evidence type="ECO:0000256" key="2">
    <source>
        <dbReference type="SAM" id="MobiDB-lite"/>
    </source>
</evidence>
<evidence type="ECO:0000305" key="3"/>
<name>RL4_CHLL2</name>
<proteinExistence type="inferred from homology"/>
<reference key="1">
    <citation type="submission" date="2008-05" db="EMBL/GenBank/DDBJ databases">
        <title>Complete sequence of Chlorobium limicola DSM 245.</title>
        <authorList>
            <consortium name="US DOE Joint Genome Institute"/>
            <person name="Lucas S."/>
            <person name="Copeland A."/>
            <person name="Lapidus A."/>
            <person name="Glavina del Rio T."/>
            <person name="Dalin E."/>
            <person name="Tice H."/>
            <person name="Bruce D."/>
            <person name="Goodwin L."/>
            <person name="Pitluck S."/>
            <person name="Schmutz J."/>
            <person name="Larimer F."/>
            <person name="Land M."/>
            <person name="Hauser L."/>
            <person name="Kyrpides N."/>
            <person name="Ovchinnikova G."/>
            <person name="Zhao F."/>
            <person name="Li T."/>
            <person name="Liu Z."/>
            <person name="Overmann J."/>
            <person name="Bryant D.A."/>
            <person name="Richardson P."/>
        </authorList>
    </citation>
    <scope>NUCLEOTIDE SEQUENCE [LARGE SCALE GENOMIC DNA]</scope>
    <source>
        <strain>DSM 245 / NBRC 103803 / 6330</strain>
    </source>
</reference>
<sequence length="208" mass="22684">MELKVLNTGGTETGEVVTLNDEIFGADISEHAMYLDVKSILANRRQGTHKAKTRAEVRGGGRKPFRQKGTGNARQGSTRSPLMIGGGTIFGPQPRSYDQKVNKKVKQLARRSALSAKAQAGQIVVVEDFRLGEIKTKPVADILKNLGLAEKKTLMLTPEYDMIIARSGRNIEALNIMSAEKASTYDILDSQAIVFQKAALKKIEDTLG</sequence>
<gene>
    <name evidence="1" type="primary">rplD</name>
    <name type="ordered locus">Clim_2228</name>
</gene>
<organism>
    <name type="scientific">Chlorobium limicola (strain DSM 245 / NBRC 103803 / 6330)</name>
    <dbReference type="NCBI Taxonomy" id="290315"/>
    <lineage>
        <taxon>Bacteria</taxon>
        <taxon>Pseudomonadati</taxon>
        <taxon>Chlorobiota</taxon>
        <taxon>Chlorobiia</taxon>
        <taxon>Chlorobiales</taxon>
        <taxon>Chlorobiaceae</taxon>
        <taxon>Chlorobium/Pelodictyon group</taxon>
        <taxon>Chlorobium</taxon>
    </lineage>
</organism>
<dbReference type="EMBL" id="CP001097">
    <property type="protein sequence ID" value="ACD91252.1"/>
    <property type="molecule type" value="Genomic_DNA"/>
</dbReference>
<dbReference type="RefSeq" id="WP_012467119.1">
    <property type="nucleotide sequence ID" value="NC_010803.1"/>
</dbReference>
<dbReference type="SMR" id="B3EGY9"/>
<dbReference type="STRING" id="290315.Clim_2228"/>
<dbReference type="KEGG" id="cli:Clim_2228"/>
<dbReference type="eggNOG" id="COG0088">
    <property type="taxonomic scope" value="Bacteria"/>
</dbReference>
<dbReference type="HOGENOM" id="CLU_041575_5_2_10"/>
<dbReference type="OrthoDB" id="9803201at2"/>
<dbReference type="Proteomes" id="UP000008841">
    <property type="component" value="Chromosome"/>
</dbReference>
<dbReference type="GO" id="GO:1990904">
    <property type="term" value="C:ribonucleoprotein complex"/>
    <property type="evidence" value="ECO:0007669"/>
    <property type="project" value="UniProtKB-KW"/>
</dbReference>
<dbReference type="GO" id="GO:0005840">
    <property type="term" value="C:ribosome"/>
    <property type="evidence" value="ECO:0007669"/>
    <property type="project" value="UniProtKB-KW"/>
</dbReference>
<dbReference type="GO" id="GO:0019843">
    <property type="term" value="F:rRNA binding"/>
    <property type="evidence" value="ECO:0007669"/>
    <property type="project" value="UniProtKB-UniRule"/>
</dbReference>
<dbReference type="GO" id="GO:0003735">
    <property type="term" value="F:structural constituent of ribosome"/>
    <property type="evidence" value="ECO:0007669"/>
    <property type="project" value="InterPro"/>
</dbReference>
<dbReference type="GO" id="GO:0006412">
    <property type="term" value="P:translation"/>
    <property type="evidence" value="ECO:0007669"/>
    <property type="project" value="UniProtKB-UniRule"/>
</dbReference>
<dbReference type="Gene3D" id="3.40.1370.10">
    <property type="match status" value="1"/>
</dbReference>
<dbReference type="HAMAP" id="MF_01328_B">
    <property type="entry name" value="Ribosomal_uL4_B"/>
    <property type="match status" value="1"/>
</dbReference>
<dbReference type="InterPro" id="IPR002136">
    <property type="entry name" value="Ribosomal_uL4"/>
</dbReference>
<dbReference type="InterPro" id="IPR013005">
    <property type="entry name" value="Ribosomal_uL4-like"/>
</dbReference>
<dbReference type="InterPro" id="IPR023574">
    <property type="entry name" value="Ribosomal_uL4_dom_sf"/>
</dbReference>
<dbReference type="NCBIfam" id="TIGR03953">
    <property type="entry name" value="rplD_bact"/>
    <property type="match status" value="1"/>
</dbReference>
<dbReference type="PANTHER" id="PTHR10746">
    <property type="entry name" value="50S RIBOSOMAL PROTEIN L4"/>
    <property type="match status" value="1"/>
</dbReference>
<dbReference type="PANTHER" id="PTHR10746:SF6">
    <property type="entry name" value="LARGE RIBOSOMAL SUBUNIT PROTEIN UL4M"/>
    <property type="match status" value="1"/>
</dbReference>
<dbReference type="Pfam" id="PF00573">
    <property type="entry name" value="Ribosomal_L4"/>
    <property type="match status" value="1"/>
</dbReference>
<dbReference type="SUPFAM" id="SSF52166">
    <property type="entry name" value="Ribosomal protein L4"/>
    <property type="match status" value="1"/>
</dbReference>
<feature type="chain" id="PRO_1000142098" description="Large ribosomal subunit protein uL4">
    <location>
        <begin position="1"/>
        <end position="208"/>
    </location>
</feature>
<feature type="region of interest" description="Disordered" evidence="2">
    <location>
        <begin position="46"/>
        <end position="84"/>
    </location>
</feature>
<feature type="compositionally biased region" description="Polar residues" evidence="2">
    <location>
        <begin position="69"/>
        <end position="80"/>
    </location>
</feature>
<comment type="function">
    <text evidence="1">One of the primary rRNA binding proteins, this protein initially binds near the 5'-end of the 23S rRNA. It is important during the early stages of 50S assembly. It makes multiple contacts with different domains of the 23S rRNA in the assembled 50S subunit and ribosome.</text>
</comment>
<comment type="function">
    <text evidence="1">Forms part of the polypeptide exit tunnel.</text>
</comment>
<comment type="subunit">
    <text evidence="1">Part of the 50S ribosomal subunit.</text>
</comment>
<comment type="similarity">
    <text evidence="1">Belongs to the universal ribosomal protein uL4 family.</text>
</comment>